<sequence length="354" mass="38327">MQFIDHAEIEVIAGKGGDGIVAFRREKYVPAGGPAGGNGGWGGSVIFRAEENLQTLLDFRYARTFKAQDGERGGPNNCTGASGEDLIVDVPCGTVIYDRETDEEIGDLVFHGQIFCVAKGGKGGLGNKHFLSNKNRAPEYALPGLEGEIKQLRLELKLLAEVGIIGLPNAGKSTLISALSAARPKIGAYPFTTLIPNLGVVKRPTGDGTVFADIPGLIEGAHQGVGLGHEFLRHIERTKVLVHLVDLNAEDPIKNYETIQGELEAYGRGLPELPQIIALNKLDAGDHEFADFITEELRRLTDAKILTISAVSRTGLEQLLQEIWDVLDYLKEISRNEAPETSVMDLESLHIADE</sequence>
<dbReference type="EC" id="3.6.5.-" evidence="1"/>
<dbReference type="EMBL" id="CP000951">
    <property type="protein sequence ID" value="ACA99512.1"/>
    <property type="molecule type" value="Genomic_DNA"/>
</dbReference>
<dbReference type="SMR" id="B1XN32"/>
<dbReference type="STRING" id="32049.SYNPCC7002_A1521"/>
<dbReference type="KEGG" id="syp:SYNPCC7002_A1521"/>
<dbReference type="eggNOG" id="COG0536">
    <property type="taxonomic scope" value="Bacteria"/>
</dbReference>
<dbReference type="HOGENOM" id="CLU_011747_2_0_3"/>
<dbReference type="Proteomes" id="UP000001688">
    <property type="component" value="Chromosome"/>
</dbReference>
<dbReference type="GO" id="GO:0005737">
    <property type="term" value="C:cytoplasm"/>
    <property type="evidence" value="ECO:0007669"/>
    <property type="project" value="UniProtKB-SubCell"/>
</dbReference>
<dbReference type="GO" id="GO:0005525">
    <property type="term" value="F:GTP binding"/>
    <property type="evidence" value="ECO:0007669"/>
    <property type="project" value="UniProtKB-UniRule"/>
</dbReference>
<dbReference type="GO" id="GO:0003924">
    <property type="term" value="F:GTPase activity"/>
    <property type="evidence" value="ECO:0007669"/>
    <property type="project" value="UniProtKB-UniRule"/>
</dbReference>
<dbReference type="GO" id="GO:0000287">
    <property type="term" value="F:magnesium ion binding"/>
    <property type="evidence" value="ECO:0007669"/>
    <property type="project" value="InterPro"/>
</dbReference>
<dbReference type="GO" id="GO:0042254">
    <property type="term" value="P:ribosome biogenesis"/>
    <property type="evidence" value="ECO:0007669"/>
    <property type="project" value="UniProtKB-UniRule"/>
</dbReference>
<dbReference type="CDD" id="cd01898">
    <property type="entry name" value="Obg"/>
    <property type="match status" value="1"/>
</dbReference>
<dbReference type="FunFam" id="2.70.210.12:FF:000001">
    <property type="entry name" value="GTPase Obg"/>
    <property type="match status" value="1"/>
</dbReference>
<dbReference type="Gene3D" id="2.70.210.12">
    <property type="entry name" value="GTP1/OBG domain"/>
    <property type="match status" value="1"/>
</dbReference>
<dbReference type="Gene3D" id="3.40.50.300">
    <property type="entry name" value="P-loop containing nucleotide triphosphate hydrolases"/>
    <property type="match status" value="1"/>
</dbReference>
<dbReference type="HAMAP" id="MF_01454">
    <property type="entry name" value="GTPase_Obg"/>
    <property type="match status" value="1"/>
</dbReference>
<dbReference type="InterPro" id="IPR031167">
    <property type="entry name" value="G_OBG"/>
</dbReference>
<dbReference type="InterPro" id="IPR006073">
    <property type="entry name" value="GTP-bd"/>
</dbReference>
<dbReference type="InterPro" id="IPR014100">
    <property type="entry name" value="GTP-bd_Obg/CgtA"/>
</dbReference>
<dbReference type="InterPro" id="IPR006074">
    <property type="entry name" value="GTP1-OBG_CS"/>
</dbReference>
<dbReference type="InterPro" id="IPR006169">
    <property type="entry name" value="GTP1_OBG_dom"/>
</dbReference>
<dbReference type="InterPro" id="IPR036726">
    <property type="entry name" value="GTP1_OBG_dom_sf"/>
</dbReference>
<dbReference type="InterPro" id="IPR045086">
    <property type="entry name" value="OBG_GTPase"/>
</dbReference>
<dbReference type="InterPro" id="IPR027417">
    <property type="entry name" value="P-loop_NTPase"/>
</dbReference>
<dbReference type="NCBIfam" id="TIGR02729">
    <property type="entry name" value="Obg_CgtA"/>
    <property type="match status" value="1"/>
</dbReference>
<dbReference type="NCBIfam" id="NF008955">
    <property type="entry name" value="PRK12297.1"/>
    <property type="match status" value="1"/>
</dbReference>
<dbReference type="NCBIfam" id="NF008956">
    <property type="entry name" value="PRK12299.1"/>
    <property type="match status" value="1"/>
</dbReference>
<dbReference type="PANTHER" id="PTHR11702">
    <property type="entry name" value="DEVELOPMENTALLY REGULATED GTP-BINDING PROTEIN-RELATED"/>
    <property type="match status" value="1"/>
</dbReference>
<dbReference type="PANTHER" id="PTHR11702:SF31">
    <property type="entry name" value="MITOCHONDRIAL RIBOSOME-ASSOCIATED GTPASE 2"/>
    <property type="match status" value="1"/>
</dbReference>
<dbReference type="Pfam" id="PF01018">
    <property type="entry name" value="GTP1_OBG"/>
    <property type="match status" value="1"/>
</dbReference>
<dbReference type="Pfam" id="PF01926">
    <property type="entry name" value="MMR_HSR1"/>
    <property type="match status" value="1"/>
</dbReference>
<dbReference type="PIRSF" id="PIRSF002401">
    <property type="entry name" value="GTP_bd_Obg/CgtA"/>
    <property type="match status" value="1"/>
</dbReference>
<dbReference type="PRINTS" id="PR00326">
    <property type="entry name" value="GTP1OBG"/>
</dbReference>
<dbReference type="SUPFAM" id="SSF82051">
    <property type="entry name" value="Obg GTP-binding protein N-terminal domain"/>
    <property type="match status" value="1"/>
</dbReference>
<dbReference type="SUPFAM" id="SSF52540">
    <property type="entry name" value="P-loop containing nucleoside triphosphate hydrolases"/>
    <property type="match status" value="1"/>
</dbReference>
<dbReference type="PROSITE" id="PS51710">
    <property type="entry name" value="G_OBG"/>
    <property type="match status" value="1"/>
</dbReference>
<dbReference type="PROSITE" id="PS00905">
    <property type="entry name" value="GTP1_OBG"/>
    <property type="match status" value="1"/>
</dbReference>
<dbReference type="PROSITE" id="PS51883">
    <property type="entry name" value="OBG"/>
    <property type="match status" value="1"/>
</dbReference>
<gene>
    <name evidence="1" type="primary">obg</name>
    <name type="ordered locus">SYNPCC7002_A1521</name>
</gene>
<protein>
    <recommendedName>
        <fullName evidence="1">GTPase Obg</fullName>
        <ecNumber evidence="1">3.6.5.-</ecNumber>
    </recommendedName>
    <alternativeName>
        <fullName evidence="1">GTP-binding protein Obg</fullName>
    </alternativeName>
</protein>
<feature type="chain" id="PRO_0000386333" description="GTPase Obg">
    <location>
        <begin position="1"/>
        <end position="354"/>
    </location>
</feature>
<feature type="domain" description="Obg" evidence="2">
    <location>
        <begin position="1"/>
        <end position="159"/>
    </location>
</feature>
<feature type="domain" description="OBG-type G" evidence="1">
    <location>
        <begin position="160"/>
        <end position="328"/>
    </location>
</feature>
<feature type="binding site" evidence="1">
    <location>
        <begin position="166"/>
        <end position="173"/>
    </location>
    <ligand>
        <name>GTP</name>
        <dbReference type="ChEBI" id="CHEBI:37565"/>
    </ligand>
</feature>
<feature type="binding site" evidence="1">
    <location>
        <position position="173"/>
    </location>
    <ligand>
        <name>Mg(2+)</name>
        <dbReference type="ChEBI" id="CHEBI:18420"/>
    </ligand>
</feature>
<feature type="binding site" evidence="1">
    <location>
        <begin position="191"/>
        <end position="195"/>
    </location>
    <ligand>
        <name>GTP</name>
        <dbReference type="ChEBI" id="CHEBI:37565"/>
    </ligand>
</feature>
<feature type="binding site" evidence="1">
    <location>
        <position position="193"/>
    </location>
    <ligand>
        <name>Mg(2+)</name>
        <dbReference type="ChEBI" id="CHEBI:18420"/>
    </ligand>
</feature>
<feature type="binding site" evidence="1">
    <location>
        <begin position="213"/>
        <end position="216"/>
    </location>
    <ligand>
        <name>GTP</name>
        <dbReference type="ChEBI" id="CHEBI:37565"/>
    </ligand>
</feature>
<feature type="binding site" evidence="1">
    <location>
        <begin position="280"/>
        <end position="283"/>
    </location>
    <ligand>
        <name>GTP</name>
        <dbReference type="ChEBI" id="CHEBI:37565"/>
    </ligand>
</feature>
<feature type="binding site" evidence="1">
    <location>
        <begin position="309"/>
        <end position="311"/>
    </location>
    <ligand>
        <name>GTP</name>
        <dbReference type="ChEBI" id="CHEBI:37565"/>
    </ligand>
</feature>
<name>OBG_PICP2</name>
<proteinExistence type="inferred from homology"/>
<organism>
    <name type="scientific">Picosynechococcus sp. (strain ATCC 27264 / PCC 7002 / PR-6)</name>
    <name type="common">Agmenellum quadruplicatum</name>
    <dbReference type="NCBI Taxonomy" id="32049"/>
    <lineage>
        <taxon>Bacteria</taxon>
        <taxon>Bacillati</taxon>
        <taxon>Cyanobacteriota</taxon>
        <taxon>Cyanophyceae</taxon>
        <taxon>Oscillatoriophycideae</taxon>
        <taxon>Chroococcales</taxon>
        <taxon>Geminocystaceae</taxon>
        <taxon>Picosynechococcus</taxon>
    </lineage>
</organism>
<evidence type="ECO:0000255" key="1">
    <source>
        <dbReference type="HAMAP-Rule" id="MF_01454"/>
    </source>
</evidence>
<evidence type="ECO:0000255" key="2">
    <source>
        <dbReference type="PROSITE-ProRule" id="PRU01231"/>
    </source>
</evidence>
<reference key="1">
    <citation type="submission" date="2008-02" db="EMBL/GenBank/DDBJ databases">
        <title>Complete sequence of Synechococcus sp. PCC 7002.</title>
        <authorList>
            <person name="Li T."/>
            <person name="Zhao J."/>
            <person name="Zhao C."/>
            <person name="Liu Z."/>
            <person name="Zhao F."/>
            <person name="Marquardt J."/>
            <person name="Nomura C.T."/>
            <person name="Persson S."/>
            <person name="Detter J.C."/>
            <person name="Richardson P.M."/>
            <person name="Lanz C."/>
            <person name="Schuster S.C."/>
            <person name="Wang J."/>
            <person name="Li S."/>
            <person name="Huang X."/>
            <person name="Cai T."/>
            <person name="Yu Z."/>
            <person name="Luo J."/>
            <person name="Zhao J."/>
            <person name="Bryant D.A."/>
        </authorList>
    </citation>
    <scope>NUCLEOTIDE SEQUENCE [LARGE SCALE GENOMIC DNA]</scope>
    <source>
        <strain>ATCC 27264 / PCC 7002 / PR-6</strain>
    </source>
</reference>
<accession>B1XN32</accession>
<comment type="function">
    <text evidence="1">An essential GTPase which binds GTP, GDP and possibly (p)ppGpp with moderate affinity, with high nucleotide exchange rates and a fairly low GTP hydrolysis rate. Plays a role in control of the cell cycle, stress response, ribosome biogenesis and in those bacteria that undergo differentiation, in morphogenesis control.</text>
</comment>
<comment type="cofactor">
    <cofactor evidence="1">
        <name>Mg(2+)</name>
        <dbReference type="ChEBI" id="CHEBI:18420"/>
    </cofactor>
</comment>
<comment type="subunit">
    <text evidence="1">Monomer.</text>
</comment>
<comment type="subcellular location">
    <subcellularLocation>
        <location evidence="1">Cytoplasm</location>
    </subcellularLocation>
</comment>
<comment type="similarity">
    <text evidence="1">Belongs to the TRAFAC class OBG-HflX-like GTPase superfamily. OBG GTPase family.</text>
</comment>
<keyword id="KW-0963">Cytoplasm</keyword>
<keyword id="KW-0342">GTP-binding</keyword>
<keyword id="KW-0378">Hydrolase</keyword>
<keyword id="KW-0460">Magnesium</keyword>
<keyword id="KW-0479">Metal-binding</keyword>
<keyword id="KW-0547">Nucleotide-binding</keyword>
<keyword id="KW-1185">Reference proteome</keyword>